<organism>
    <name type="scientific">Streptococcus pneumoniae (strain ATCC 700669 / Spain 23F-1)</name>
    <dbReference type="NCBI Taxonomy" id="561276"/>
    <lineage>
        <taxon>Bacteria</taxon>
        <taxon>Bacillati</taxon>
        <taxon>Bacillota</taxon>
        <taxon>Bacilli</taxon>
        <taxon>Lactobacillales</taxon>
        <taxon>Streptococcaceae</taxon>
        <taxon>Streptococcus</taxon>
    </lineage>
</organism>
<feature type="propeptide" id="PRO_0000459953" evidence="1">
    <location>
        <begin position="1"/>
        <end position="12"/>
    </location>
</feature>
<feature type="chain" id="PRO_1000195889" description="Large ribosomal subunit protein bL27">
    <location>
        <begin position="13"/>
        <end position="97"/>
    </location>
</feature>
<feature type="region of interest" description="Disordered" evidence="3">
    <location>
        <begin position="13"/>
        <end position="37"/>
    </location>
</feature>
<accession>B8ZPV1</accession>
<gene>
    <name evidence="2" type="primary">rpmA</name>
    <name type="ordered locus">SPN23F10280</name>
</gene>
<proteinExistence type="inferred from homology"/>
<comment type="PTM">
    <text evidence="1">The N-terminus is cleaved by ribosomal processing cysteine protease Prp.</text>
</comment>
<comment type="similarity">
    <text evidence="2">Belongs to the bacterial ribosomal protein bL27 family.</text>
</comment>
<keyword id="KW-0687">Ribonucleoprotein</keyword>
<keyword id="KW-0689">Ribosomal protein</keyword>
<dbReference type="EMBL" id="FM211187">
    <property type="protein sequence ID" value="CAR68849.1"/>
    <property type="molecule type" value="Genomic_DNA"/>
</dbReference>
<dbReference type="RefSeq" id="WP_000916509.1">
    <property type="nucleotide sequence ID" value="NC_011900.1"/>
</dbReference>
<dbReference type="SMR" id="B8ZPV1"/>
<dbReference type="GeneID" id="93739803"/>
<dbReference type="KEGG" id="sne:SPN23F10280"/>
<dbReference type="HOGENOM" id="CLU_095424_4_0_9"/>
<dbReference type="GO" id="GO:0022625">
    <property type="term" value="C:cytosolic large ribosomal subunit"/>
    <property type="evidence" value="ECO:0007669"/>
    <property type="project" value="TreeGrafter"/>
</dbReference>
<dbReference type="GO" id="GO:0003735">
    <property type="term" value="F:structural constituent of ribosome"/>
    <property type="evidence" value="ECO:0007669"/>
    <property type="project" value="InterPro"/>
</dbReference>
<dbReference type="GO" id="GO:0006412">
    <property type="term" value="P:translation"/>
    <property type="evidence" value="ECO:0007669"/>
    <property type="project" value="UniProtKB-UniRule"/>
</dbReference>
<dbReference type="FunFam" id="2.40.50.100:FF:000004">
    <property type="entry name" value="50S ribosomal protein L27"/>
    <property type="match status" value="1"/>
</dbReference>
<dbReference type="Gene3D" id="2.40.50.100">
    <property type="match status" value="1"/>
</dbReference>
<dbReference type="HAMAP" id="MF_00539">
    <property type="entry name" value="Ribosomal_bL27"/>
    <property type="match status" value="1"/>
</dbReference>
<dbReference type="InterPro" id="IPR001684">
    <property type="entry name" value="Ribosomal_bL27"/>
</dbReference>
<dbReference type="InterPro" id="IPR018261">
    <property type="entry name" value="Ribosomal_bL27_CS"/>
</dbReference>
<dbReference type="NCBIfam" id="TIGR00062">
    <property type="entry name" value="L27"/>
    <property type="match status" value="1"/>
</dbReference>
<dbReference type="PANTHER" id="PTHR15893:SF0">
    <property type="entry name" value="LARGE RIBOSOMAL SUBUNIT PROTEIN BL27M"/>
    <property type="match status" value="1"/>
</dbReference>
<dbReference type="PANTHER" id="PTHR15893">
    <property type="entry name" value="RIBOSOMAL PROTEIN L27"/>
    <property type="match status" value="1"/>
</dbReference>
<dbReference type="Pfam" id="PF01016">
    <property type="entry name" value="Ribosomal_L27"/>
    <property type="match status" value="1"/>
</dbReference>
<dbReference type="PRINTS" id="PR00063">
    <property type="entry name" value="RIBOSOMALL27"/>
</dbReference>
<dbReference type="SUPFAM" id="SSF110324">
    <property type="entry name" value="Ribosomal L27 protein-like"/>
    <property type="match status" value="1"/>
</dbReference>
<dbReference type="PROSITE" id="PS00831">
    <property type="entry name" value="RIBOSOMAL_L27"/>
    <property type="match status" value="1"/>
</dbReference>
<sequence>MLKMTLNNLQLFAHKKGGGSTSNGRDSQAKRLGAKAADGQTVTGGSILYRQRGTHIYPGVNVGRGGDDTLFAKVEGVVRFERKGRDKKQVSVYPIAK</sequence>
<reference key="1">
    <citation type="journal article" date="2009" name="J. Bacteriol.">
        <title>Role of conjugative elements in the evolution of the multidrug-resistant pandemic clone Streptococcus pneumoniae Spain23F ST81.</title>
        <authorList>
            <person name="Croucher N.J."/>
            <person name="Walker D."/>
            <person name="Romero P."/>
            <person name="Lennard N."/>
            <person name="Paterson G.K."/>
            <person name="Bason N.C."/>
            <person name="Mitchell A.M."/>
            <person name="Quail M.A."/>
            <person name="Andrew P.W."/>
            <person name="Parkhill J."/>
            <person name="Bentley S.D."/>
            <person name="Mitchell T.J."/>
        </authorList>
    </citation>
    <scope>NUCLEOTIDE SEQUENCE [LARGE SCALE GENOMIC DNA]</scope>
    <source>
        <strain>ATCC 700669 / Spain 23F-1</strain>
    </source>
</reference>
<name>RL27_STRPJ</name>
<evidence type="ECO:0000250" key="1">
    <source>
        <dbReference type="UniProtKB" id="Q2FXT0"/>
    </source>
</evidence>
<evidence type="ECO:0000255" key="2">
    <source>
        <dbReference type="HAMAP-Rule" id="MF_00539"/>
    </source>
</evidence>
<evidence type="ECO:0000256" key="3">
    <source>
        <dbReference type="SAM" id="MobiDB-lite"/>
    </source>
</evidence>
<evidence type="ECO:0000305" key="4"/>
<protein>
    <recommendedName>
        <fullName evidence="2">Large ribosomal subunit protein bL27</fullName>
    </recommendedName>
    <alternativeName>
        <fullName evidence="4">50S ribosomal protein L27</fullName>
    </alternativeName>
</protein>